<gene>
    <name type="ordered locus">Bmul_4720</name>
    <name type="ordered locus">BMULJ_03796</name>
</gene>
<reference key="1">
    <citation type="journal article" date="1991" name="Gene">
        <title>IS406 and IS407, two gene-activating insertion sequences for Pseudomonas cepacia.</title>
        <authorList>
            <person name="Wood M.S."/>
            <person name="Byrne A."/>
            <person name="Lessie T.G."/>
        </authorList>
    </citation>
    <scope>NUCLEOTIDE SEQUENCE [GENOMIC DNA]</scope>
</reference>
<reference key="2">
    <citation type="submission" date="2007-10" db="EMBL/GenBank/DDBJ databases">
        <title>Complete sequence of chromosome 2 of Burkholderia multivorans ATCC 17616.</title>
        <authorList>
            <person name="Copeland A."/>
            <person name="Lucas S."/>
            <person name="Lapidus A."/>
            <person name="Barry K."/>
            <person name="Glavina del Rio T."/>
            <person name="Dalin E."/>
            <person name="Tice H."/>
            <person name="Pitluck S."/>
            <person name="Chain P."/>
            <person name="Malfatti S."/>
            <person name="Shin M."/>
            <person name="Vergez L."/>
            <person name="Schmutz J."/>
            <person name="Larimer F."/>
            <person name="Land M."/>
            <person name="Hauser L."/>
            <person name="Kyrpides N."/>
            <person name="Kim E."/>
            <person name="Tiedje J."/>
            <person name="Richardson P."/>
        </authorList>
    </citation>
    <scope>NUCLEOTIDE SEQUENCE [LARGE SCALE GENOMIC DNA]</scope>
    <source>
        <strain>ATCC 17616 / 249</strain>
    </source>
</reference>
<reference key="3">
    <citation type="submission" date="2007-04" db="EMBL/GenBank/DDBJ databases">
        <title>Complete genome sequence of Burkholderia multivorans ATCC 17616.</title>
        <authorList>
            <person name="Ohtsubo Y."/>
            <person name="Yamashita A."/>
            <person name="Kurokawa K."/>
            <person name="Takami H."/>
            <person name="Yuhara S."/>
            <person name="Nishiyama E."/>
            <person name="Endo R."/>
            <person name="Miyazaki R."/>
            <person name="Ono A."/>
            <person name="Yano K."/>
            <person name="Ito M."/>
            <person name="Sota M."/>
            <person name="Yuji N."/>
            <person name="Hattori M."/>
            <person name="Tsuda M."/>
        </authorList>
    </citation>
    <scope>NUCLEOTIDE SEQUENCE [LARGE SCALE GENOMIC DNA]</scope>
    <source>
        <strain>ATCC 17616 / 249</strain>
    </source>
</reference>
<evidence type="ECO:0000305" key="1"/>
<feature type="chain" id="PRO_0000075535" description="Insertion element IS407 uncharacterized 10.0 kDa protein">
    <location>
        <begin position="1"/>
        <end position="87"/>
    </location>
</feature>
<name>YI74_BURM1</name>
<proteinExistence type="inferred from homology"/>
<accession>P24580</accession>
<accession>A9AMT1</accession>
<dbReference type="EMBL" id="M82980">
    <property type="protein sequence ID" value="AAA25039.1"/>
    <property type="molecule type" value="Genomic_DNA"/>
</dbReference>
<dbReference type="EMBL" id="CP000869">
    <property type="protein sequence ID" value="ABX18397.1"/>
    <property type="molecule type" value="Genomic_DNA"/>
</dbReference>
<dbReference type="EMBL" id="AP009386">
    <property type="protein sequence ID" value="BAG45656.1"/>
    <property type="molecule type" value="Genomic_DNA"/>
</dbReference>
<dbReference type="PIR" id="S28800">
    <property type="entry name" value="S28800"/>
</dbReference>
<dbReference type="SMR" id="P24580"/>
<dbReference type="STRING" id="395019.BMULJ_03796"/>
<dbReference type="KEGG" id="bmj:BMULJ_03796"/>
<dbReference type="KEGG" id="bmu:Bmul_4720"/>
<dbReference type="eggNOG" id="COG2963">
    <property type="taxonomic scope" value="Bacteria"/>
</dbReference>
<dbReference type="HOGENOM" id="CLU_027402_34_1_4"/>
<dbReference type="Proteomes" id="UP000008815">
    <property type="component" value="Chromosome 2"/>
</dbReference>
<dbReference type="GO" id="GO:0003677">
    <property type="term" value="F:DNA binding"/>
    <property type="evidence" value="ECO:0007669"/>
    <property type="project" value="InterPro"/>
</dbReference>
<dbReference type="GO" id="GO:0004803">
    <property type="term" value="F:transposase activity"/>
    <property type="evidence" value="ECO:0007669"/>
    <property type="project" value="InterPro"/>
</dbReference>
<dbReference type="GO" id="GO:0006313">
    <property type="term" value="P:DNA transposition"/>
    <property type="evidence" value="ECO:0007669"/>
    <property type="project" value="InterPro"/>
</dbReference>
<dbReference type="InterPro" id="IPR009057">
    <property type="entry name" value="Homeodomain-like_sf"/>
</dbReference>
<dbReference type="InterPro" id="IPR002514">
    <property type="entry name" value="Transposase_8"/>
</dbReference>
<dbReference type="InterPro" id="IPR052546">
    <property type="entry name" value="Transposase_8_domain"/>
</dbReference>
<dbReference type="PANTHER" id="PTHR33609">
    <property type="entry name" value="LOW CALCIUM RESPONSE LOCUS PROTEIN S"/>
    <property type="match status" value="1"/>
</dbReference>
<dbReference type="PANTHER" id="PTHR33609:SF1">
    <property type="entry name" value="TRANSPOSASE"/>
    <property type="match status" value="1"/>
</dbReference>
<dbReference type="Pfam" id="PF01527">
    <property type="entry name" value="HTH_Tnp_1"/>
    <property type="match status" value="1"/>
</dbReference>
<dbReference type="SUPFAM" id="SSF46689">
    <property type="entry name" value="Homeodomain-like"/>
    <property type="match status" value="1"/>
</dbReference>
<organism>
    <name type="scientific">Burkholderia multivorans (strain ATCC 17616 / 249)</name>
    <dbReference type="NCBI Taxonomy" id="395019"/>
    <lineage>
        <taxon>Bacteria</taxon>
        <taxon>Pseudomonadati</taxon>
        <taxon>Pseudomonadota</taxon>
        <taxon>Betaproteobacteria</taxon>
        <taxon>Burkholderiales</taxon>
        <taxon>Burkholderiaceae</taxon>
        <taxon>Burkholderia</taxon>
        <taxon>Burkholderia cepacia complex</taxon>
    </lineage>
</organism>
<comment type="similarity">
    <text evidence="1">Belongs to the transposase 8 family.</text>
</comment>
<keyword id="KW-1185">Reference proteome</keyword>
<keyword id="KW-0814">Transposable element</keyword>
<protein>
    <recommendedName>
        <fullName>Insertion element IS407 uncharacterized 10.0 kDa protein</fullName>
    </recommendedName>
    <alternativeName>
        <fullName>ORF4</fullName>
    </alternativeName>
</protein>
<sequence>MKKRFTEQQIIGFLKEAEAGMPVKELCRKHGFSDASFYTWRAKFGGMEVSEARRLKDLEVENARLKKLLAEAMLDMEALKVVVKGKP</sequence>